<keyword id="KW-0255">Endonuclease</keyword>
<keyword id="KW-0378">Hydrolase</keyword>
<keyword id="KW-0540">Nuclease</keyword>
<keyword id="KW-1185">Reference proteome</keyword>
<organism>
    <name type="scientific">Acanthamoeba polyphaga mimivirus</name>
    <name type="common">APMV</name>
    <dbReference type="NCBI Taxonomy" id="212035"/>
    <lineage>
        <taxon>Viruses</taxon>
        <taxon>Varidnaviria</taxon>
        <taxon>Bamfordvirae</taxon>
        <taxon>Nucleocytoviricota</taxon>
        <taxon>Megaviricetes</taxon>
        <taxon>Imitervirales</taxon>
        <taxon>Mimiviridae</taxon>
        <taxon>Megamimivirinae</taxon>
        <taxon>Mimivirus</taxon>
        <taxon>Mimivirus bradfordmassiliense</taxon>
    </lineage>
</organism>
<reference key="1">
    <citation type="journal article" date="2004" name="Science">
        <title>The 1.2-megabase genome sequence of Mimivirus.</title>
        <authorList>
            <person name="Raoult D."/>
            <person name="Audic S."/>
            <person name="Robert C."/>
            <person name="Abergel C."/>
            <person name="Renesto P."/>
            <person name="Ogata H."/>
            <person name="La Scola B."/>
            <person name="Susan M."/>
            <person name="Claverie J.-M."/>
        </authorList>
    </citation>
    <scope>NUCLEOTIDE SEQUENCE [LARGE SCALE GENOMIC DNA]</scope>
    <source>
        <strain>Rowbotham-Bradford</strain>
    </source>
</reference>
<protein>
    <recommendedName>
        <fullName>Uncharacterized HNH endonuclease L560</fullName>
        <ecNumber>3.1.-.-</ecNumber>
    </recommendedName>
</protein>
<name>YL560_MIMIV</name>
<dbReference type="EC" id="3.1.-.-"/>
<dbReference type="EMBL" id="AY653733">
    <property type="protein sequence ID" value="AAV50824.1"/>
    <property type="molecule type" value="Genomic_DNA"/>
</dbReference>
<dbReference type="SMR" id="Q5UR39"/>
<dbReference type="KEGG" id="vg:9925196"/>
<dbReference type="OrthoDB" id="16536at10239"/>
<dbReference type="Proteomes" id="UP000001134">
    <property type="component" value="Genome"/>
</dbReference>
<dbReference type="GO" id="GO:0004519">
    <property type="term" value="F:endonuclease activity"/>
    <property type="evidence" value="ECO:0007669"/>
    <property type="project" value="UniProtKB-KW"/>
</dbReference>
<dbReference type="Gene3D" id="3.90.75.20">
    <property type="match status" value="1"/>
</dbReference>
<dbReference type="InterPro" id="IPR044925">
    <property type="entry name" value="His-Me_finger_sf"/>
</dbReference>
<dbReference type="InterPro" id="IPR003615">
    <property type="entry name" value="HNH_nuc"/>
</dbReference>
<dbReference type="Pfam" id="PF13392">
    <property type="entry name" value="HNH_3"/>
    <property type="match status" value="1"/>
</dbReference>
<dbReference type="SMART" id="SM00507">
    <property type="entry name" value="HNHc"/>
    <property type="match status" value="1"/>
</dbReference>
<dbReference type="SUPFAM" id="SSF54060">
    <property type="entry name" value="His-Me finger endonucleases"/>
    <property type="match status" value="1"/>
</dbReference>
<accession>Q5UR39</accession>
<sequence>MKPTKSNKPKKTTKFPKQTESNTDDFFIIDSVVYFTLLGRGKGTFAFVSLDKWPIVSKYKWYLGKSGYPVSYDLGKMQLHRFIYTLIIEGKIPSDIYVDHIDHNKLNNTNSNLRLATPQQNSFNKSTSSNKKGVRKISENNYKASVVKNGITHEIKNIPTEEQAAQIYNLMAEELFGEFAAPNKIDF</sequence>
<organismHost>
    <name type="scientific">Acanthamoeba polyphaga</name>
    <name type="common">Amoeba</name>
    <dbReference type="NCBI Taxonomy" id="5757"/>
</organismHost>
<proteinExistence type="predicted"/>
<gene>
    <name type="ordered locus">MIMI_L560</name>
</gene>
<feature type="chain" id="PRO_0000309579" description="Uncharacterized HNH endonuclease L560">
    <location>
        <begin position="1"/>
        <end position="187"/>
    </location>
</feature>